<proteinExistence type="inferred from homology"/>
<dbReference type="EC" id="2.5.1.-" evidence="1"/>
<dbReference type="EMBL" id="AL591688">
    <property type="protein sequence ID" value="CAC46078.1"/>
    <property type="molecule type" value="Genomic_DNA"/>
</dbReference>
<dbReference type="RefSeq" id="NP_385605.1">
    <property type="nucleotide sequence ID" value="NC_003047.1"/>
</dbReference>
<dbReference type="RefSeq" id="WP_010969256.1">
    <property type="nucleotide sequence ID" value="NC_003047.1"/>
</dbReference>
<dbReference type="SMR" id="Q92Q51"/>
<dbReference type="EnsemblBacteria" id="CAC46078">
    <property type="protein sequence ID" value="CAC46078"/>
    <property type="gene ID" value="SMc02097"/>
</dbReference>
<dbReference type="KEGG" id="sme:SMc02097"/>
<dbReference type="PATRIC" id="fig|266834.11.peg.2919"/>
<dbReference type="eggNOG" id="COG0020">
    <property type="taxonomic scope" value="Bacteria"/>
</dbReference>
<dbReference type="HOGENOM" id="CLU_038505_1_1_5"/>
<dbReference type="OrthoDB" id="4191603at2"/>
<dbReference type="Proteomes" id="UP000001976">
    <property type="component" value="Chromosome"/>
</dbReference>
<dbReference type="GO" id="GO:0005829">
    <property type="term" value="C:cytosol"/>
    <property type="evidence" value="ECO:0007669"/>
    <property type="project" value="TreeGrafter"/>
</dbReference>
<dbReference type="GO" id="GO:0008834">
    <property type="term" value="F:ditrans,polycis-undecaprenyl-diphosphate synthase [(2E,6E)-farnesyl-diphosphate specific] activity"/>
    <property type="evidence" value="ECO:0007669"/>
    <property type="project" value="TreeGrafter"/>
</dbReference>
<dbReference type="GO" id="GO:0000287">
    <property type="term" value="F:magnesium ion binding"/>
    <property type="evidence" value="ECO:0007669"/>
    <property type="project" value="UniProtKB-UniRule"/>
</dbReference>
<dbReference type="GO" id="GO:0016094">
    <property type="term" value="P:polyprenol biosynthetic process"/>
    <property type="evidence" value="ECO:0007669"/>
    <property type="project" value="TreeGrafter"/>
</dbReference>
<dbReference type="CDD" id="cd00475">
    <property type="entry name" value="Cis_IPPS"/>
    <property type="match status" value="1"/>
</dbReference>
<dbReference type="FunFam" id="3.40.1180.10:FF:000001">
    <property type="entry name" value="(2E,6E)-farnesyl-diphosphate-specific ditrans,polycis-undecaprenyl-diphosphate synthase"/>
    <property type="match status" value="1"/>
</dbReference>
<dbReference type="Gene3D" id="3.40.1180.10">
    <property type="entry name" value="Decaprenyl diphosphate synthase-like"/>
    <property type="match status" value="1"/>
</dbReference>
<dbReference type="HAMAP" id="MF_01139">
    <property type="entry name" value="ISPT"/>
    <property type="match status" value="1"/>
</dbReference>
<dbReference type="InterPro" id="IPR001441">
    <property type="entry name" value="UPP_synth-like"/>
</dbReference>
<dbReference type="InterPro" id="IPR018520">
    <property type="entry name" value="UPP_synth-like_CS"/>
</dbReference>
<dbReference type="InterPro" id="IPR036424">
    <property type="entry name" value="UPP_synth-like_sf"/>
</dbReference>
<dbReference type="NCBIfam" id="NF011405">
    <property type="entry name" value="PRK14830.1"/>
    <property type="match status" value="1"/>
</dbReference>
<dbReference type="NCBIfam" id="NF011408">
    <property type="entry name" value="PRK14834.1"/>
    <property type="match status" value="1"/>
</dbReference>
<dbReference type="NCBIfam" id="TIGR00055">
    <property type="entry name" value="uppS"/>
    <property type="match status" value="1"/>
</dbReference>
<dbReference type="PANTHER" id="PTHR10291:SF0">
    <property type="entry name" value="DEHYDRODOLICHYL DIPHOSPHATE SYNTHASE 2"/>
    <property type="match status" value="1"/>
</dbReference>
<dbReference type="PANTHER" id="PTHR10291">
    <property type="entry name" value="DEHYDRODOLICHYL DIPHOSPHATE SYNTHASE FAMILY MEMBER"/>
    <property type="match status" value="1"/>
</dbReference>
<dbReference type="Pfam" id="PF01255">
    <property type="entry name" value="Prenyltransf"/>
    <property type="match status" value="1"/>
</dbReference>
<dbReference type="SUPFAM" id="SSF64005">
    <property type="entry name" value="Undecaprenyl diphosphate synthase"/>
    <property type="match status" value="1"/>
</dbReference>
<dbReference type="PROSITE" id="PS01066">
    <property type="entry name" value="UPP_SYNTHASE"/>
    <property type="match status" value="1"/>
</dbReference>
<gene>
    <name evidence="1" type="primary">uppS</name>
    <name type="ordered locus">R01499</name>
    <name type="ORF">SMc02097</name>
</gene>
<sequence length="247" mass="27495">MQEFNPANVPAHVAIIMDGNGRWANARGLPRTMGHRKGVEAVRGAVRTAAEIGIRYLTLFAFSSENWNRPENEVSDLMGLLKAFIRRDLADLHRENVRIRVIGDRSNLSGDILPLLIEAEETTIANTGITVVIAFNYGARDELARAMRRLAGEVAAGRLRPEEITAERISSTIDTAGIPDPDLIIRTSGEERLSNFLLWQGAYSELLFIPDLWPDFTRETFFAAIEQYACRERRFGGLTQPTLAVGS</sequence>
<evidence type="ECO:0000255" key="1">
    <source>
        <dbReference type="HAMAP-Rule" id="MF_01139"/>
    </source>
</evidence>
<organism>
    <name type="scientific">Rhizobium meliloti (strain 1021)</name>
    <name type="common">Ensifer meliloti</name>
    <name type="synonym">Sinorhizobium meliloti</name>
    <dbReference type="NCBI Taxonomy" id="266834"/>
    <lineage>
        <taxon>Bacteria</taxon>
        <taxon>Pseudomonadati</taxon>
        <taxon>Pseudomonadota</taxon>
        <taxon>Alphaproteobacteria</taxon>
        <taxon>Hyphomicrobiales</taxon>
        <taxon>Rhizobiaceae</taxon>
        <taxon>Sinorhizobium/Ensifer group</taxon>
        <taxon>Sinorhizobium</taxon>
    </lineage>
</organism>
<feature type="chain" id="PRO_0000123659" description="Isoprenyl transferase">
    <location>
        <begin position="1"/>
        <end position="247"/>
    </location>
</feature>
<feature type="active site" evidence="1">
    <location>
        <position position="18"/>
    </location>
</feature>
<feature type="active site" description="Proton acceptor" evidence="1">
    <location>
        <position position="66"/>
    </location>
</feature>
<feature type="binding site" evidence="1">
    <location>
        <position position="18"/>
    </location>
    <ligand>
        <name>Mg(2+)</name>
        <dbReference type="ChEBI" id="CHEBI:18420"/>
    </ligand>
</feature>
<feature type="binding site" evidence="1">
    <location>
        <begin position="19"/>
        <end position="22"/>
    </location>
    <ligand>
        <name>substrate</name>
    </ligand>
</feature>
<feature type="binding site" evidence="1">
    <location>
        <position position="23"/>
    </location>
    <ligand>
        <name>substrate</name>
    </ligand>
</feature>
<feature type="binding site" evidence="1">
    <location>
        <position position="31"/>
    </location>
    <ligand>
        <name>substrate</name>
    </ligand>
</feature>
<feature type="binding site" evidence="1">
    <location>
        <position position="35"/>
    </location>
    <ligand>
        <name>substrate</name>
    </ligand>
</feature>
<feature type="binding site" evidence="1">
    <location>
        <begin position="63"/>
        <end position="65"/>
    </location>
    <ligand>
        <name>substrate</name>
    </ligand>
</feature>
<feature type="binding site" evidence="1">
    <location>
        <position position="67"/>
    </location>
    <ligand>
        <name>substrate</name>
    </ligand>
</feature>
<feature type="binding site" evidence="1">
    <location>
        <position position="69"/>
    </location>
    <ligand>
        <name>substrate</name>
    </ligand>
</feature>
<feature type="binding site" evidence="1">
    <location>
        <position position="186"/>
    </location>
    <ligand>
        <name>substrate</name>
    </ligand>
</feature>
<feature type="binding site" evidence="1">
    <location>
        <begin position="192"/>
        <end position="194"/>
    </location>
    <ligand>
        <name>substrate</name>
    </ligand>
</feature>
<feature type="binding site" evidence="1">
    <location>
        <position position="205"/>
    </location>
    <ligand>
        <name>Mg(2+)</name>
        <dbReference type="ChEBI" id="CHEBI:18420"/>
    </ligand>
</feature>
<keyword id="KW-0460">Magnesium</keyword>
<keyword id="KW-0479">Metal-binding</keyword>
<keyword id="KW-1185">Reference proteome</keyword>
<keyword id="KW-0808">Transferase</keyword>
<name>ISPT_RHIME</name>
<comment type="function">
    <text evidence="1">Catalyzes the condensation of isopentenyl diphosphate (IPP) with allylic pyrophosphates generating different type of terpenoids.</text>
</comment>
<comment type="cofactor">
    <cofactor evidence="1">
        <name>Mg(2+)</name>
        <dbReference type="ChEBI" id="CHEBI:18420"/>
    </cofactor>
    <text evidence="1">Binds 2 magnesium ions per subunit.</text>
</comment>
<comment type="subunit">
    <text evidence="1">Homodimer.</text>
</comment>
<comment type="similarity">
    <text evidence="1">Belongs to the UPP synthase family.</text>
</comment>
<reference key="1">
    <citation type="journal article" date="2001" name="Proc. Natl. Acad. Sci. U.S.A.">
        <title>Analysis of the chromosome sequence of the legume symbiont Sinorhizobium meliloti strain 1021.</title>
        <authorList>
            <person name="Capela D."/>
            <person name="Barloy-Hubler F."/>
            <person name="Gouzy J."/>
            <person name="Bothe G."/>
            <person name="Ampe F."/>
            <person name="Batut J."/>
            <person name="Boistard P."/>
            <person name="Becker A."/>
            <person name="Boutry M."/>
            <person name="Cadieu E."/>
            <person name="Dreano S."/>
            <person name="Gloux S."/>
            <person name="Godrie T."/>
            <person name="Goffeau A."/>
            <person name="Kahn D."/>
            <person name="Kiss E."/>
            <person name="Lelaure V."/>
            <person name="Masuy D."/>
            <person name="Pohl T."/>
            <person name="Portetelle D."/>
            <person name="Puehler A."/>
            <person name="Purnelle B."/>
            <person name="Ramsperger U."/>
            <person name="Renard C."/>
            <person name="Thebault P."/>
            <person name="Vandenbol M."/>
            <person name="Weidner S."/>
            <person name="Galibert F."/>
        </authorList>
    </citation>
    <scope>NUCLEOTIDE SEQUENCE [LARGE SCALE GENOMIC DNA]</scope>
    <source>
        <strain>1021</strain>
    </source>
</reference>
<reference key="2">
    <citation type="journal article" date="2001" name="Science">
        <title>The composite genome of the legume symbiont Sinorhizobium meliloti.</title>
        <authorList>
            <person name="Galibert F."/>
            <person name="Finan T.M."/>
            <person name="Long S.R."/>
            <person name="Puehler A."/>
            <person name="Abola P."/>
            <person name="Ampe F."/>
            <person name="Barloy-Hubler F."/>
            <person name="Barnett M.J."/>
            <person name="Becker A."/>
            <person name="Boistard P."/>
            <person name="Bothe G."/>
            <person name="Boutry M."/>
            <person name="Bowser L."/>
            <person name="Buhrmester J."/>
            <person name="Cadieu E."/>
            <person name="Capela D."/>
            <person name="Chain P."/>
            <person name="Cowie A."/>
            <person name="Davis R.W."/>
            <person name="Dreano S."/>
            <person name="Federspiel N.A."/>
            <person name="Fisher R.F."/>
            <person name="Gloux S."/>
            <person name="Godrie T."/>
            <person name="Goffeau A."/>
            <person name="Golding B."/>
            <person name="Gouzy J."/>
            <person name="Gurjal M."/>
            <person name="Hernandez-Lucas I."/>
            <person name="Hong A."/>
            <person name="Huizar L."/>
            <person name="Hyman R.W."/>
            <person name="Jones T."/>
            <person name="Kahn D."/>
            <person name="Kahn M.L."/>
            <person name="Kalman S."/>
            <person name="Keating D.H."/>
            <person name="Kiss E."/>
            <person name="Komp C."/>
            <person name="Lelaure V."/>
            <person name="Masuy D."/>
            <person name="Palm C."/>
            <person name="Peck M.C."/>
            <person name="Pohl T.M."/>
            <person name="Portetelle D."/>
            <person name="Purnelle B."/>
            <person name="Ramsperger U."/>
            <person name="Surzycki R."/>
            <person name="Thebault P."/>
            <person name="Vandenbol M."/>
            <person name="Vorhoelter F.J."/>
            <person name="Weidner S."/>
            <person name="Wells D.H."/>
            <person name="Wong K."/>
            <person name="Yeh K.-C."/>
            <person name="Batut J."/>
        </authorList>
    </citation>
    <scope>NUCLEOTIDE SEQUENCE [LARGE SCALE GENOMIC DNA]</scope>
    <source>
        <strain>1021</strain>
    </source>
</reference>
<protein>
    <recommendedName>
        <fullName evidence="1">Isoprenyl transferase</fullName>
        <ecNumber evidence="1">2.5.1.-</ecNumber>
    </recommendedName>
</protein>
<accession>Q92Q51</accession>